<protein>
    <recommendedName>
        <fullName evidence="1">Large ribosomal subunit protein bL12</fullName>
    </recommendedName>
    <alternativeName>
        <fullName evidence="2">50S ribosomal protein L7/L12</fullName>
    </alternativeName>
</protein>
<gene>
    <name evidence="1" type="primary">rplL</name>
    <name type="ordered locus">M6_Spy0814</name>
</gene>
<comment type="function">
    <text evidence="1">Forms part of the ribosomal stalk which helps the ribosome interact with GTP-bound translation factors. Is thus essential for accurate translation.</text>
</comment>
<comment type="subunit">
    <text evidence="1">Homodimer. Part of the ribosomal stalk of the 50S ribosomal subunit. Forms a multimeric L10(L12)X complex, where L10 forms an elongated spine to which 2 to 4 L12 dimers bind in a sequential fashion. Binds GTP-bound translation factors.</text>
</comment>
<comment type="similarity">
    <text evidence="1">Belongs to the bacterial ribosomal protein bL12 family.</text>
</comment>
<comment type="sequence caution" evidence="2">
    <conflict type="erroneous initiation">
        <sequence resource="EMBL-CDS" id="AAT86949"/>
    </conflict>
</comment>
<evidence type="ECO:0000255" key="1">
    <source>
        <dbReference type="HAMAP-Rule" id="MF_00368"/>
    </source>
</evidence>
<evidence type="ECO:0000305" key="2"/>
<proteinExistence type="inferred from homology"/>
<organism>
    <name type="scientific">Streptococcus pyogenes serotype M6 (strain ATCC BAA-946 / MGAS10394)</name>
    <dbReference type="NCBI Taxonomy" id="286636"/>
    <lineage>
        <taxon>Bacteria</taxon>
        <taxon>Bacillati</taxon>
        <taxon>Bacillota</taxon>
        <taxon>Bacilli</taxon>
        <taxon>Lactobacillales</taxon>
        <taxon>Streptococcaceae</taxon>
        <taxon>Streptococcus</taxon>
    </lineage>
</organism>
<name>RL7_STRP6</name>
<accession>Q5XCB4</accession>
<reference key="1">
    <citation type="journal article" date="2004" name="J. Infect. Dis.">
        <title>Progress toward characterization of the group A Streptococcus metagenome: complete genome sequence of a macrolide-resistant serotype M6 strain.</title>
        <authorList>
            <person name="Banks D.J."/>
            <person name="Porcella S.F."/>
            <person name="Barbian K.D."/>
            <person name="Beres S.B."/>
            <person name="Philips L.E."/>
            <person name="Voyich J.M."/>
            <person name="DeLeo F.R."/>
            <person name="Martin J.M."/>
            <person name="Somerville G.A."/>
            <person name="Musser J.M."/>
        </authorList>
    </citation>
    <scope>NUCLEOTIDE SEQUENCE [LARGE SCALE GENOMIC DNA]</scope>
    <source>
        <strain>ATCC BAA-946 / MGAS10394</strain>
    </source>
</reference>
<sequence length="121" mass="12256">MALNIENIIAEIKEASILELNDLVKAIEEEFGVTAAAPVAAAAAGGAEEAAKDSFDVELTSAGDKKVGVIKAVREITGLGLKEAKGLVDGAPANVKEGVAAAEAEEIKAKLEEAGATITLK</sequence>
<keyword id="KW-0687">Ribonucleoprotein</keyword>
<keyword id="KW-0689">Ribosomal protein</keyword>
<dbReference type="EMBL" id="CP000003">
    <property type="protein sequence ID" value="AAT86949.1"/>
    <property type="status" value="ALT_INIT"/>
    <property type="molecule type" value="Genomic_DNA"/>
</dbReference>
<dbReference type="RefSeq" id="WP_002984819.1">
    <property type="nucleotide sequence ID" value="NC_006086.1"/>
</dbReference>
<dbReference type="SMR" id="Q5XCB4"/>
<dbReference type="GeneID" id="69900915"/>
<dbReference type="KEGG" id="spa:M6_Spy0814"/>
<dbReference type="HOGENOM" id="CLU_086499_3_2_9"/>
<dbReference type="Proteomes" id="UP000001167">
    <property type="component" value="Chromosome"/>
</dbReference>
<dbReference type="GO" id="GO:0022625">
    <property type="term" value="C:cytosolic large ribosomal subunit"/>
    <property type="evidence" value="ECO:0007669"/>
    <property type="project" value="TreeGrafter"/>
</dbReference>
<dbReference type="GO" id="GO:0003729">
    <property type="term" value="F:mRNA binding"/>
    <property type="evidence" value="ECO:0007669"/>
    <property type="project" value="TreeGrafter"/>
</dbReference>
<dbReference type="GO" id="GO:0003735">
    <property type="term" value="F:structural constituent of ribosome"/>
    <property type="evidence" value="ECO:0007669"/>
    <property type="project" value="InterPro"/>
</dbReference>
<dbReference type="GO" id="GO:0006412">
    <property type="term" value="P:translation"/>
    <property type="evidence" value="ECO:0007669"/>
    <property type="project" value="UniProtKB-UniRule"/>
</dbReference>
<dbReference type="CDD" id="cd00387">
    <property type="entry name" value="Ribosomal_L7_L12"/>
    <property type="match status" value="1"/>
</dbReference>
<dbReference type="FunFam" id="3.30.1390.10:FF:000001">
    <property type="entry name" value="50S ribosomal protein L7/L12"/>
    <property type="match status" value="1"/>
</dbReference>
<dbReference type="Gene3D" id="3.30.1390.10">
    <property type="match status" value="1"/>
</dbReference>
<dbReference type="Gene3D" id="1.20.5.710">
    <property type="entry name" value="Single helix bin"/>
    <property type="match status" value="1"/>
</dbReference>
<dbReference type="HAMAP" id="MF_00368">
    <property type="entry name" value="Ribosomal_bL12"/>
    <property type="match status" value="1"/>
</dbReference>
<dbReference type="InterPro" id="IPR000206">
    <property type="entry name" value="Ribosomal_bL12"/>
</dbReference>
<dbReference type="InterPro" id="IPR013823">
    <property type="entry name" value="Ribosomal_bL12_C"/>
</dbReference>
<dbReference type="InterPro" id="IPR014719">
    <property type="entry name" value="Ribosomal_bL12_C/ClpS-like"/>
</dbReference>
<dbReference type="InterPro" id="IPR008932">
    <property type="entry name" value="Ribosomal_bL12_oligo"/>
</dbReference>
<dbReference type="InterPro" id="IPR036235">
    <property type="entry name" value="Ribosomal_bL12_oligo_N_sf"/>
</dbReference>
<dbReference type="NCBIfam" id="TIGR00855">
    <property type="entry name" value="L12"/>
    <property type="match status" value="1"/>
</dbReference>
<dbReference type="PANTHER" id="PTHR45987">
    <property type="entry name" value="39S RIBOSOMAL PROTEIN L12"/>
    <property type="match status" value="1"/>
</dbReference>
<dbReference type="PANTHER" id="PTHR45987:SF4">
    <property type="entry name" value="LARGE RIBOSOMAL SUBUNIT PROTEIN BL12M"/>
    <property type="match status" value="1"/>
</dbReference>
<dbReference type="Pfam" id="PF00542">
    <property type="entry name" value="Ribosomal_L12"/>
    <property type="match status" value="1"/>
</dbReference>
<dbReference type="Pfam" id="PF16320">
    <property type="entry name" value="Ribosomal_L12_N"/>
    <property type="match status" value="1"/>
</dbReference>
<dbReference type="SUPFAM" id="SSF54736">
    <property type="entry name" value="ClpS-like"/>
    <property type="match status" value="1"/>
</dbReference>
<dbReference type="SUPFAM" id="SSF48300">
    <property type="entry name" value="Ribosomal protein L7/12, oligomerisation (N-terminal) domain"/>
    <property type="match status" value="1"/>
</dbReference>
<feature type="chain" id="PRO_0000157592" description="Large ribosomal subunit protein bL12">
    <location>
        <begin position="1"/>
        <end position="121"/>
    </location>
</feature>